<keyword id="KW-0067">ATP-binding</keyword>
<keyword id="KW-0375">Hydrogen ion transport</keyword>
<keyword id="KW-0406">Ion transport</keyword>
<keyword id="KW-0547">Nucleotide-binding</keyword>
<keyword id="KW-1278">Translocase</keyword>
<keyword id="KW-0813">Transport</keyword>
<feature type="chain" id="PRO_0000144573" description="V-type proton ATPase catalytic subunit A isoform 2">
    <location>
        <begin position="1"/>
        <end position="613"/>
    </location>
</feature>
<feature type="binding site" evidence="1">
    <location>
        <begin position="240"/>
        <end position="247"/>
    </location>
    <ligand>
        <name>ATP</name>
        <dbReference type="ChEBI" id="CHEBI:30616"/>
    </ligand>
</feature>
<evidence type="ECO:0000255" key="1"/>
<evidence type="ECO:0000305" key="2"/>
<organism>
    <name type="scientific">Acetabularia acetabulum</name>
    <name type="common">Mermaid's wine glass</name>
    <name type="synonym">Acetabularia mediterranea</name>
    <dbReference type="NCBI Taxonomy" id="35845"/>
    <lineage>
        <taxon>Eukaryota</taxon>
        <taxon>Viridiplantae</taxon>
        <taxon>Chlorophyta</taxon>
        <taxon>Ulvophyceae</taxon>
        <taxon>TCBD clade</taxon>
        <taxon>Dasycladales</taxon>
        <taxon>Polyphysaceae</taxon>
        <taxon>Acetabularia</taxon>
    </lineage>
</organism>
<sequence length="613" mass="67375">MSKAKEGDYGSIKKVSGPVVVADNMGGSAMYELVRVGTGELIGEIIRLEGDTATIQVYEETSGLTVGDGVLRTKQPLSVDLGPGILGNIFDGIQRPLKAIADVSGDVFIPRGVNVPSLDQTKQWEFHPSSYRVGDRVTGGDIIGTVPENTLLDHKVMLIPQAKGTITYIAPAGNYNINERIIEVEFQGTKYEYCMKQSWPVRSPRPVVEKLLADTPLLTGQRVLDSLFPGVRGGTCAIPGAFGCGKTVISQALSKYSNSDGIVYVGCGERGNEMAEVLMDFPQLTMTMPDGREESIMKRTTLVANTSNMPVAAREASIYTGITLSEYFRDMGYNFAMMADSTSRWAEALREISGRLAEMPADSGYPAYLGARLASFYERSGRVACIGSPEREGSVTIVGAVSPPGGDFSDPVTSATLGIVQVFWGLDKKLAQRKHFPSVNWLISYSKYLNALEPFYEKFDNDFVDIRQVAREVLQKEDELNEIVQLVGKDALAESDKIILETADFLKEDYLAQNSFTKYDKYCPFYKSVGMMRNIVTFHRLATQAIERTATGNSDGQKLLSNIIKAKLGDLLYKVSSQKFEDPSDGESVVTGRLNELNDELKEKFRALEDEYS</sequence>
<proteinExistence type="evidence at transcript level"/>
<dbReference type="EC" id="7.1.2.2"/>
<dbReference type="EMBL" id="D50529">
    <property type="protein sequence ID" value="BAA09098.1"/>
    <property type="molecule type" value="mRNA"/>
</dbReference>
<dbReference type="SMR" id="Q38677"/>
<dbReference type="GO" id="GO:0000325">
    <property type="term" value="C:plant-type vacuole"/>
    <property type="evidence" value="ECO:0007669"/>
    <property type="project" value="TreeGrafter"/>
</dbReference>
<dbReference type="GO" id="GO:0033180">
    <property type="term" value="C:proton-transporting V-type ATPase, V1 domain"/>
    <property type="evidence" value="ECO:0007669"/>
    <property type="project" value="InterPro"/>
</dbReference>
<dbReference type="GO" id="GO:0005524">
    <property type="term" value="F:ATP binding"/>
    <property type="evidence" value="ECO:0007669"/>
    <property type="project" value="UniProtKB-KW"/>
</dbReference>
<dbReference type="GO" id="GO:0016887">
    <property type="term" value="F:ATP hydrolysis activity"/>
    <property type="evidence" value="ECO:0007669"/>
    <property type="project" value="InterPro"/>
</dbReference>
<dbReference type="GO" id="GO:0046961">
    <property type="term" value="F:proton-transporting ATPase activity, rotational mechanism"/>
    <property type="evidence" value="ECO:0007669"/>
    <property type="project" value="InterPro"/>
</dbReference>
<dbReference type="GO" id="GO:0046034">
    <property type="term" value="P:ATP metabolic process"/>
    <property type="evidence" value="ECO:0007669"/>
    <property type="project" value="InterPro"/>
</dbReference>
<dbReference type="CDD" id="cd18111">
    <property type="entry name" value="ATP-synt_V_A-type_alpha_C"/>
    <property type="match status" value="1"/>
</dbReference>
<dbReference type="CDD" id="cd18119">
    <property type="entry name" value="ATP-synt_V_A-type_alpha_N"/>
    <property type="match status" value="1"/>
</dbReference>
<dbReference type="CDD" id="cd01134">
    <property type="entry name" value="V_A-ATPase_A"/>
    <property type="match status" value="1"/>
</dbReference>
<dbReference type="FunFam" id="1.10.1140.10:FF:000002">
    <property type="entry name" value="V-type proton ATPase catalytic subunit A"/>
    <property type="match status" value="1"/>
</dbReference>
<dbReference type="FunFam" id="2.40.30.20:FF:000002">
    <property type="entry name" value="V-type proton ATPase catalytic subunit A"/>
    <property type="match status" value="1"/>
</dbReference>
<dbReference type="FunFam" id="2.40.50.100:FF:000008">
    <property type="entry name" value="V-type proton ATPase catalytic subunit A"/>
    <property type="match status" value="1"/>
</dbReference>
<dbReference type="FunFam" id="3.40.50.300:FF:000052">
    <property type="entry name" value="V-type proton ATPase catalytic subunit A"/>
    <property type="match status" value="1"/>
</dbReference>
<dbReference type="Gene3D" id="2.40.30.20">
    <property type="match status" value="1"/>
</dbReference>
<dbReference type="Gene3D" id="2.40.50.100">
    <property type="match status" value="1"/>
</dbReference>
<dbReference type="Gene3D" id="1.10.1140.10">
    <property type="entry name" value="Bovine Mitochondrial F1-atpase, Atp Synthase Beta Chain, Chain D, domain 3"/>
    <property type="match status" value="1"/>
</dbReference>
<dbReference type="Gene3D" id="3.40.50.300">
    <property type="entry name" value="P-loop containing nucleotide triphosphate hydrolases"/>
    <property type="match status" value="1"/>
</dbReference>
<dbReference type="HAMAP" id="MF_00309">
    <property type="entry name" value="ATP_synth_A_arch"/>
    <property type="match status" value="1"/>
</dbReference>
<dbReference type="InterPro" id="IPR055190">
    <property type="entry name" value="ATP-synt_VA_C"/>
</dbReference>
<dbReference type="InterPro" id="IPR031686">
    <property type="entry name" value="ATP-synth_a_Xtn"/>
</dbReference>
<dbReference type="InterPro" id="IPR023366">
    <property type="entry name" value="ATP_synth_asu-like_sf"/>
</dbReference>
<dbReference type="InterPro" id="IPR020003">
    <property type="entry name" value="ATPase_a/bsu_AS"/>
</dbReference>
<dbReference type="InterPro" id="IPR004100">
    <property type="entry name" value="ATPase_F1/V1/A1_a/bsu_N"/>
</dbReference>
<dbReference type="InterPro" id="IPR036121">
    <property type="entry name" value="ATPase_F1/V1/A1_a/bsu_N_sf"/>
</dbReference>
<dbReference type="InterPro" id="IPR000194">
    <property type="entry name" value="ATPase_F1/V1/A1_a/bsu_nucl-bd"/>
</dbReference>
<dbReference type="InterPro" id="IPR024034">
    <property type="entry name" value="ATPase_F1/V1_b/a_C"/>
</dbReference>
<dbReference type="InterPro" id="IPR005725">
    <property type="entry name" value="ATPase_V1-cplx_asu"/>
</dbReference>
<dbReference type="InterPro" id="IPR027417">
    <property type="entry name" value="P-loop_NTPase"/>
</dbReference>
<dbReference type="InterPro" id="IPR022878">
    <property type="entry name" value="V-ATPase_asu"/>
</dbReference>
<dbReference type="NCBIfam" id="NF003220">
    <property type="entry name" value="PRK04192.1"/>
    <property type="match status" value="1"/>
</dbReference>
<dbReference type="NCBIfam" id="TIGR01042">
    <property type="entry name" value="V-ATPase_V1_A"/>
    <property type="match status" value="1"/>
</dbReference>
<dbReference type="PANTHER" id="PTHR43607:SF1">
    <property type="entry name" value="H(+)-TRANSPORTING TWO-SECTOR ATPASE"/>
    <property type="match status" value="1"/>
</dbReference>
<dbReference type="PANTHER" id="PTHR43607">
    <property type="entry name" value="V-TYPE PROTON ATPASE CATALYTIC SUBUNIT A"/>
    <property type="match status" value="1"/>
</dbReference>
<dbReference type="Pfam" id="PF00006">
    <property type="entry name" value="ATP-synt_ab"/>
    <property type="match status" value="1"/>
</dbReference>
<dbReference type="Pfam" id="PF02874">
    <property type="entry name" value="ATP-synt_ab_N"/>
    <property type="match status" value="1"/>
</dbReference>
<dbReference type="Pfam" id="PF16886">
    <property type="entry name" value="ATP-synt_ab_Xtn"/>
    <property type="match status" value="1"/>
</dbReference>
<dbReference type="Pfam" id="PF22919">
    <property type="entry name" value="ATP-synt_VA_C"/>
    <property type="match status" value="1"/>
</dbReference>
<dbReference type="SUPFAM" id="SSF47917">
    <property type="entry name" value="C-terminal domain of alpha and beta subunits of F1 ATP synthase"/>
    <property type="match status" value="1"/>
</dbReference>
<dbReference type="SUPFAM" id="SSF50615">
    <property type="entry name" value="N-terminal domain of alpha and beta subunits of F1 ATP synthase"/>
    <property type="match status" value="1"/>
</dbReference>
<dbReference type="SUPFAM" id="SSF52540">
    <property type="entry name" value="P-loop containing nucleoside triphosphate hydrolases"/>
    <property type="match status" value="1"/>
</dbReference>
<dbReference type="PROSITE" id="PS00152">
    <property type="entry name" value="ATPASE_ALPHA_BETA"/>
    <property type="match status" value="1"/>
</dbReference>
<reference key="1">
    <citation type="online journal article" date="1995" name="Plant Gene Register">
        <title>Molecular cloning of cDNAs encoding Acetabularia acetabulum V type ATPase, A subunit.</title>
        <authorList>
            <person name="Konishi K."/>
            <person name="Moritani C."/>
            <person name="Rahman H."/>
            <person name="Kadowaki H."/>
            <person name="Ohmori S."/>
            <person name="de Groot E.J."/>
            <person name="Oesterhelt D."/>
            <person name="Ikeda M."/>
        </authorList>
        <locator>PGR95-042</locator>
    </citation>
    <scope>NUCLEOTIDE SEQUENCE [MRNA]</scope>
</reference>
<reference key="2">
    <citation type="online journal article" date="1996" name="Plant Gene Register">
        <title>Molecular cloning of cDNAs encoding Acetabularia acetabulum V type ATPase, A and B subunits.</title>
        <authorList>
            <person name="Ikeda M."/>
            <person name="Konishi K."/>
            <person name="Kadowaki H."/>
            <person name="Moritani C."/>
            <person name="Watanabe Y."/>
        </authorList>
        <locator>PGR96-030</locator>
    </citation>
    <scope>NUCLEOTIDE SEQUENCE [MRNA]</scope>
</reference>
<protein>
    <recommendedName>
        <fullName>V-type proton ATPase catalytic subunit A isoform 2</fullName>
        <shortName>V-ATPase subunit A 2</shortName>
        <ecNumber>7.1.2.2</ecNumber>
    </recommendedName>
    <alternativeName>
        <fullName>V-ATPase 69 kDa subunit 2</fullName>
    </alternativeName>
    <alternativeName>
        <fullName>Vacuolar proton pump subunit alpha 2</fullName>
    </alternativeName>
</protein>
<accession>Q38677</accession>
<comment type="function">
    <text>Catalytic subunit of the peripheral V1 complex of vacuolar ATPase. V-ATPase vacuolar ATPase is responsible for acidifying a variety of intracellular compartments in eukaryotic cells.</text>
</comment>
<comment type="catalytic activity">
    <reaction>
        <text>ATP + H2O + 4 H(+)(in) = ADP + phosphate + 5 H(+)(out)</text>
        <dbReference type="Rhea" id="RHEA:57720"/>
        <dbReference type="ChEBI" id="CHEBI:15377"/>
        <dbReference type="ChEBI" id="CHEBI:15378"/>
        <dbReference type="ChEBI" id="CHEBI:30616"/>
        <dbReference type="ChEBI" id="CHEBI:43474"/>
        <dbReference type="ChEBI" id="CHEBI:456216"/>
        <dbReference type="EC" id="7.1.2.2"/>
    </reaction>
</comment>
<comment type="subunit">
    <text>V-ATPase is a heteromultimeric enzyme composed of a peripheral catalytic V1 complex (main components: subunits A, B, C, D, E, and F) attached to an integral membrane V0 proton pore complex (main component: the proteolipid protein).</text>
</comment>
<comment type="similarity">
    <text evidence="2">Belongs to the ATPase alpha/beta chains family.</text>
</comment>
<name>VATA2_ACEAT</name>